<evidence type="ECO:0000250" key="1"/>
<evidence type="ECO:0000250" key="2">
    <source>
        <dbReference type="UniProtKB" id="O81270"/>
    </source>
</evidence>
<evidence type="ECO:0000255" key="3"/>
<evidence type="ECO:0000256" key="4">
    <source>
        <dbReference type="SAM" id="MobiDB-lite"/>
    </source>
</evidence>
<evidence type="ECO:0000269" key="5">
    <source>
    </source>
</evidence>
<evidence type="ECO:0000303" key="6">
    <source ref="3"/>
</evidence>
<evidence type="ECO:0000305" key="7"/>
<accession>B3H7A9</accession>
<accession>F4I4P7</accession>
<accession>Q8LE27</accession>
<accession>Q9LR37</accession>
<organism>
    <name type="scientific">Arabidopsis thaliana</name>
    <name type="common">Mouse-ear cress</name>
    <dbReference type="NCBI Taxonomy" id="3702"/>
    <lineage>
        <taxon>Eukaryota</taxon>
        <taxon>Viridiplantae</taxon>
        <taxon>Streptophyta</taxon>
        <taxon>Embryophyta</taxon>
        <taxon>Tracheophyta</taxon>
        <taxon>Spermatophyta</taxon>
        <taxon>Magnoliopsida</taxon>
        <taxon>eudicotyledons</taxon>
        <taxon>Gunneridae</taxon>
        <taxon>Pentapetalae</taxon>
        <taxon>rosids</taxon>
        <taxon>malvids</taxon>
        <taxon>Brassicales</taxon>
        <taxon>Brassicaceae</taxon>
        <taxon>Camelineae</taxon>
        <taxon>Arabidopsis</taxon>
    </lineage>
</organism>
<feature type="chain" id="PRO_0000415557" description="Probable peroxygenase 7">
    <location>
        <begin position="1"/>
        <end position="210"/>
    </location>
</feature>
<feature type="domain" description="EF-hand">
    <location>
        <begin position="25"/>
        <end position="60"/>
    </location>
</feature>
<feature type="region of interest" description="Disordered" evidence="4">
    <location>
        <begin position="1"/>
        <end position="24"/>
    </location>
</feature>
<feature type="short sequence motif" description="Proline-knot">
    <location>
        <begin position="81"/>
        <end position="90"/>
    </location>
</feature>
<feature type="binding site" description="axial binding residue" evidence="1">
    <location>
        <position position="33"/>
    </location>
    <ligand>
        <name>heme</name>
        <dbReference type="ChEBI" id="CHEBI:30413"/>
    </ligand>
    <ligandPart>
        <name>Fe</name>
        <dbReference type="ChEBI" id="CHEBI:18248"/>
    </ligandPart>
</feature>
<feature type="binding site" evidence="3">
    <location>
        <position position="38"/>
    </location>
    <ligand>
        <name>Ca(2+)</name>
        <dbReference type="ChEBI" id="CHEBI:29108"/>
    </ligand>
</feature>
<feature type="binding site" evidence="3">
    <location>
        <position position="40"/>
    </location>
    <ligand>
        <name>Ca(2+)</name>
        <dbReference type="ChEBI" id="CHEBI:29108"/>
    </ligand>
</feature>
<feature type="binding site" evidence="3">
    <location>
        <position position="42"/>
    </location>
    <ligand>
        <name>Ca(2+)</name>
        <dbReference type="ChEBI" id="CHEBI:29108"/>
    </ligand>
</feature>
<feature type="binding site" evidence="3">
    <location>
        <position position="44"/>
    </location>
    <ligand>
        <name>Ca(2+)</name>
        <dbReference type="ChEBI" id="CHEBI:29108"/>
    </ligand>
</feature>
<feature type="binding site" evidence="3">
    <location>
        <position position="49"/>
    </location>
    <ligand>
        <name>Ca(2+)</name>
        <dbReference type="ChEBI" id="CHEBI:29108"/>
    </ligand>
</feature>
<feature type="modified residue" description="Phosphoserine" evidence="2">
    <location>
        <position position="188"/>
    </location>
</feature>
<feature type="splice variant" id="VSP_042287" description="In isoform 3." evidence="6">
    <location>
        <begin position="1"/>
        <end position="26"/>
    </location>
</feature>
<feature type="splice variant" id="VSP_042288" description="In isoform 2." evidence="7">
    <original>MSHQTVALASKAKSPKPKR</original>
    <variation>MFFCFCFCESKKGLCMETYLWDYVVYVG</variation>
    <location>
        <begin position="1"/>
        <end position="19"/>
    </location>
</feature>
<feature type="splice variant" id="VSP_042289" description="In isoform 2." evidence="7">
    <original>LSDYGEWKIL</original>
    <variation>FVVSELFQTN</variation>
    <location>
        <begin position="156"/>
        <end position="165"/>
    </location>
</feature>
<feature type="splice variant" id="VSP_042290" description="In isoform 2." evidence="7">
    <location>
        <begin position="166"/>
        <end position="210"/>
    </location>
</feature>
<dbReference type="EC" id="1.11.2.3"/>
<dbReference type="EMBL" id="AC005292">
    <property type="protein sequence ID" value="AAF87020.1"/>
    <property type="status" value="ALT_SEQ"/>
    <property type="molecule type" value="Genomic_DNA"/>
</dbReference>
<dbReference type="EMBL" id="CP002684">
    <property type="protein sequence ID" value="AEE30361.1"/>
    <property type="molecule type" value="Genomic_DNA"/>
</dbReference>
<dbReference type="EMBL" id="CP002684">
    <property type="protein sequence ID" value="AEE30362.1"/>
    <property type="molecule type" value="Genomic_DNA"/>
</dbReference>
<dbReference type="EMBL" id="CP002684">
    <property type="protein sequence ID" value="AEE30363.1"/>
    <property type="molecule type" value="Genomic_DNA"/>
</dbReference>
<dbReference type="EMBL" id="AY085656">
    <property type="protein sequence ID" value="AAM62877.1"/>
    <property type="molecule type" value="mRNA"/>
</dbReference>
<dbReference type="RefSeq" id="NP_001117339.1">
    <molecule id="B3H7A9-3"/>
    <property type="nucleotide sequence ID" value="NM_001123867.1"/>
</dbReference>
<dbReference type="RefSeq" id="NP_173738.2">
    <molecule id="B3H7A9-1"/>
    <property type="nucleotide sequence ID" value="NM_102173.4"/>
</dbReference>
<dbReference type="RefSeq" id="NP_973892.1">
    <molecule id="B3H7A9-2"/>
    <property type="nucleotide sequence ID" value="NM_202163.2"/>
</dbReference>
<dbReference type="STRING" id="3702.B3H7A9"/>
<dbReference type="iPTMnet" id="B3H7A9"/>
<dbReference type="PaxDb" id="3702-AT1G23240.1"/>
<dbReference type="ProteomicsDB" id="224805">
    <molecule id="B3H7A9-1"/>
</dbReference>
<dbReference type="EnsemblPlants" id="AT1G23240.1">
    <molecule id="B3H7A9-1"/>
    <property type="protein sequence ID" value="AT1G23240.1"/>
    <property type="gene ID" value="AT1G23240"/>
</dbReference>
<dbReference type="EnsemblPlants" id="AT1G23240.2">
    <molecule id="B3H7A9-2"/>
    <property type="protein sequence ID" value="AT1G23240.2"/>
    <property type="gene ID" value="AT1G23240"/>
</dbReference>
<dbReference type="EnsemblPlants" id="AT1G23240.3">
    <molecule id="B3H7A9-3"/>
    <property type="protein sequence ID" value="AT1G23240.3"/>
    <property type="gene ID" value="AT1G23240"/>
</dbReference>
<dbReference type="GeneID" id="838933"/>
<dbReference type="Gramene" id="AT1G23240.1">
    <molecule id="B3H7A9-1"/>
    <property type="protein sequence ID" value="AT1G23240.1"/>
    <property type="gene ID" value="AT1G23240"/>
</dbReference>
<dbReference type="Gramene" id="AT1G23240.2">
    <molecule id="B3H7A9-2"/>
    <property type="protein sequence ID" value="AT1G23240.2"/>
    <property type="gene ID" value="AT1G23240"/>
</dbReference>
<dbReference type="Gramene" id="AT1G23240.3">
    <molecule id="B3H7A9-3"/>
    <property type="protein sequence ID" value="AT1G23240.3"/>
    <property type="gene ID" value="AT1G23240"/>
</dbReference>
<dbReference type="KEGG" id="ath:AT1G23240"/>
<dbReference type="Araport" id="AT1G23240"/>
<dbReference type="TAIR" id="AT1G23240"/>
<dbReference type="eggNOG" id="ENOG502QTJ2">
    <property type="taxonomic scope" value="Eukaryota"/>
</dbReference>
<dbReference type="InParanoid" id="B3H7A9"/>
<dbReference type="OMA" id="MTDWRIL"/>
<dbReference type="OrthoDB" id="640742at2759"/>
<dbReference type="PhylomeDB" id="B3H7A9"/>
<dbReference type="PRO" id="PR:B3H7A9"/>
<dbReference type="Proteomes" id="UP000006548">
    <property type="component" value="Chromosome 1"/>
</dbReference>
<dbReference type="ExpressionAtlas" id="B3H7A9">
    <property type="expression patterns" value="baseline and differential"/>
</dbReference>
<dbReference type="GO" id="GO:0005576">
    <property type="term" value="C:extracellular region"/>
    <property type="evidence" value="ECO:0007669"/>
    <property type="project" value="UniProtKB-SubCell"/>
</dbReference>
<dbReference type="GO" id="GO:0016298">
    <property type="term" value="F:lipase activity"/>
    <property type="evidence" value="ECO:0000250"/>
    <property type="project" value="TAIR"/>
</dbReference>
<dbReference type="GO" id="GO:0046872">
    <property type="term" value="F:metal ion binding"/>
    <property type="evidence" value="ECO:0007669"/>
    <property type="project" value="UniProtKB-KW"/>
</dbReference>
<dbReference type="GO" id="GO:1990137">
    <property type="term" value="F:plant seed peroxygenase activity"/>
    <property type="evidence" value="ECO:0007669"/>
    <property type="project" value="UniProtKB-EC"/>
</dbReference>
<dbReference type="Gene3D" id="1.10.238.10">
    <property type="entry name" value="EF-hand"/>
    <property type="match status" value="1"/>
</dbReference>
<dbReference type="InterPro" id="IPR007736">
    <property type="entry name" value="Caleosin-related"/>
</dbReference>
<dbReference type="InterPro" id="IPR011992">
    <property type="entry name" value="EF-hand-dom_pair"/>
</dbReference>
<dbReference type="PANTHER" id="PTHR31495:SF1">
    <property type="entry name" value="INACTIVE PEROXYGENASE-LIKE PROTEIN-RELATED"/>
    <property type="match status" value="1"/>
</dbReference>
<dbReference type="PANTHER" id="PTHR31495">
    <property type="entry name" value="PEROXYGENASE 3-RELATED"/>
    <property type="match status" value="1"/>
</dbReference>
<dbReference type="Pfam" id="PF05042">
    <property type="entry name" value="Caleosin"/>
    <property type="match status" value="1"/>
</dbReference>
<dbReference type="SUPFAM" id="SSF47473">
    <property type="entry name" value="EF-hand"/>
    <property type="match status" value="1"/>
</dbReference>
<comment type="function">
    <text>Probable calcium-binding peroxygenase. May be involved in pollination.</text>
</comment>
<comment type="catalytic activity">
    <reaction>
        <text>RH + ROOH = ROH + ROH.</text>
        <dbReference type="EC" id="1.11.2.3"/>
    </reaction>
</comment>
<comment type="cofactor">
    <cofactor evidence="1">
        <name>heme b</name>
        <dbReference type="ChEBI" id="CHEBI:60344"/>
    </cofactor>
    <text evidence="1">Binds 1 heme b (iron(II)-protoporphyrin IX) group.</text>
</comment>
<comment type="cofactor">
    <cofactor evidence="1">
        <name>Ca(2+)</name>
        <dbReference type="ChEBI" id="CHEBI:29108"/>
    </cofactor>
</comment>
<comment type="subunit">
    <text evidence="1">Homodimer.</text>
</comment>
<comment type="subcellular location">
    <subcellularLocation>
        <location evidence="5">Secreted</location>
    </subcellularLocation>
</comment>
<comment type="alternative products">
    <event type="alternative splicing"/>
    <isoform>
        <id>B3H7A9-1</id>
        <name>1</name>
        <sequence type="displayed"/>
    </isoform>
    <isoform>
        <id>B3H7A9-2</id>
        <name>2</name>
        <sequence type="described" ref="VSP_042288 VSP_042289 VSP_042290"/>
    </isoform>
    <isoform>
        <id>B3H7A9-3</id>
        <name>3</name>
        <sequence type="described" ref="VSP_042287"/>
    </isoform>
</comment>
<comment type="tissue specificity">
    <text evidence="5">Expressed in pollen coat.</text>
</comment>
<comment type="domain">
    <text>Transmembrane regions are predicted by sequence analysis tools, but these regions probably constitute hydrophobic domains associated to phospholipids.</text>
</comment>
<comment type="domain">
    <text>The proline-knot motif (81-90) may be involved in targeting to lipid bodies.</text>
</comment>
<comment type="similarity">
    <text evidence="7">Belongs to the caleosin family.</text>
</comment>
<comment type="sequence caution" evidence="7">
    <conflict type="erroneous gene model prediction">
        <sequence resource="EMBL-CDS" id="AAF87020"/>
    </conflict>
</comment>
<reference key="1">
    <citation type="journal article" date="2000" name="Nature">
        <title>Sequence and analysis of chromosome 1 of the plant Arabidopsis thaliana.</title>
        <authorList>
            <person name="Theologis A."/>
            <person name="Ecker J.R."/>
            <person name="Palm C.J."/>
            <person name="Federspiel N.A."/>
            <person name="Kaul S."/>
            <person name="White O."/>
            <person name="Alonso J."/>
            <person name="Altafi H."/>
            <person name="Araujo R."/>
            <person name="Bowman C.L."/>
            <person name="Brooks S.Y."/>
            <person name="Buehler E."/>
            <person name="Chan A."/>
            <person name="Chao Q."/>
            <person name="Chen H."/>
            <person name="Cheuk R.F."/>
            <person name="Chin C.W."/>
            <person name="Chung M.K."/>
            <person name="Conn L."/>
            <person name="Conway A.B."/>
            <person name="Conway A.R."/>
            <person name="Creasy T.H."/>
            <person name="Dewar K."/>
            <person name="Dunn P."/>
            <person name="Etgu P."/>
            <person name="Feldblyum T.V."/>
            <person name="Feng J.-D."/>
            <person name="Fong B."/>
            <person name="Fujii C.Y."/>
            <person name="Gill J.E."/>
            <person name="Goldsmith A.D."/>
            <person name="Haas B."/>
            <person name="Hansen N.F."/>
            <person name="Hughes B."/>
            <person name="Huizar L."/>
            <person name="Hunter J.L."/>
            <person name="Jenkins J."/>
            <person name="Johnson-Hopson C."/>
            <person name="Khan S."/>
            <person name="Khaykin E."/>
            <person name="Kim C.J."/>
            <person name="Koo H.L."/>
            <person name="Kremenetskaia I."/>
            <person name="Kurtz D.B."/>
            <person name="Kwan A."/>
            <person name="Lam B."/>
            <person name="Langin-Hooper S."/>
            <person name="Lee A."/>
            <person name="Lee J.M."/>
            <person name="Lenz C.A."/>
            <person name="Li J.H."/>
            <person name="Li Y.-P."/>
            <person name="Lin X."/>
            <person name="Liu S.X."/>
            <person name="Liu Z.A."/>
            <person name="Luros J.S."/>
            <person name="Maiti R."/>
            <person name="Marziali A."/>
            <person name="Militscher J."/>
            <person name="Miranda M."/>
            <person name="Nguyen M."/>
            <person name="Nierman W.C."/>
            <person name="Osborne B.I."/>
            <person name="Pai G."/>
            <person name="Peterson J."/>
            <person name="Pham P.K."/>
            <person name="Rizzo M."/>
            <person name="Rooney T."/>
            <person name="Rowley D."/>
            <person name="Sakano H."/>
            <person name="Salzberg S.L."/>
            <person name="Schwartz J.R."/>
            <person name="Shinn P."/>
            <person name="Southwick A.M."/>
            <person name="Sun H."/>
            <person name="Tallon L.J."/>
            <person name="Tambunga G."/>
            <person name="Toriumi M.J."/>
            <person name="Town C.D."/>
            <person name="Utterback T."/>
            <person name="Van Aken S."/>
            <person name="Vaysberg M."/>
            <person name="Vysotskaia V.S."/>
            <person name="Walker M."/>
            <person name="Wu D."/>
            <person name="Yu G."/>
            <person name="Fraser C.M."/>
            <person name="Venter J.C."/>
            <person name="Davis R.W."/>
        </authorList>
    </citation>
    <scope>NUCLEOTIDE SEQUENCE [LARGE SCALE GENOMIC DNA]</scope>
    <source>
        <strain>cv. Columbia</strain>
    </source>
</reference>
<reference key="2">
    <citation type="journal article" date="2017" name="Plant J.">
        <title>Araport11: a complete reannotation of the Arabidopsis thaliana reference genome.</title>
        <authorList>
            <person name="Cheng C.Y."/>
            <person name="Krishnakumar V."/>
            <person name="Chan A.P."/>
            <person name="Thibaud-Nissen F."/>
            <person name="Schobel S."/>
            <person name="Town C.D."/>
        </authorList>
    </citation>
    <scope>GENOME REANNOTATION</scope>
    <source>
        <strain>cv. Columbia</strain>
    </source>
</reference>
<reference key="3">
    <citation type="submission" date="2002-03" db="EMBL/GenBank/DDBJ databases">
        <title>Full-length cDNA from Arabidopsis thaliana.</title>
        <authorList>
            <person name="Brover V.V."/>
            <person name="Troukhan M.E."/>
            <person name="Alexandrov N.A."/>
            <person name="Lu Y.-P."/>
            <person name="Flavell R.B."/>
            <person name="Feldmann K.A."/>
        </authorList>
    </citation>
    <scope>NUCLEOTIDE SEQUENCE [LARGE SCALE MRNA] (ISOFORM 3)</scope>
</reference>
<reference key="4">
    <citation type="journal article" date="2000" name="Plant Mol. Biol.">
        <title>Caleosins: Ca2+-binding proteins associated with lipid bodies.</title>
        <authorList>
            <person name="Naested H."/>
            <person name="Frandsen G.I."/>
            <person name="Jauh G.Y."/>
            <person name="Hernandez-Pinzon I."/>
            <person name="Nielsen H.B."/>
            <person name="Murphy D.J."/>
            <person name="Rogers J.C."/>
            <person name="Mundy J."/>
        </authorList>
    </citation>
    <scope>GENE FAMILY</scope>
    <scope>NOMENCLATURE</scope>
</reference>
<reference key="5">
    <citation type="journal article" date="2001" name="Science">
        <title>Gene families from the Arabidopsis thaliana pollen coat proteome.</title>
        <authorList>
            <person name="Mayfield J.A."/>
            <person name="Fiebig A."/>
            <person name="Johnstone S.E."/>
            <person name="Preuss D."/>
        </authorList>
    </citation>
    <scope>TISSUE SPECIFICITY</scope>
    <scope>SUBCELLULAR LOCATION</scope>
</reference>
<sequence length="210" mass="23851">MSHQTVALASKAKSPKPKRGKLDKEKMTALEKHVSFFDRNKDGTVYPWETYQGFRALGTGRLLAAFVAIFINMGLSKKTRPGKGFSPLFPIDVKNSHLCMHGSDTDVYDDDGRFVESKFEEIFNKHARTHKDALTAEEIQKMLKTNRDPFDITGWLSDYGEWKILHTLAQDKNGLLSEKSVRAIYDGSLFHQLEKKRSSSSSRGKKQKLP</sequence>
<gene>
    <name type="primary">PXG7</name>
    <name type="synonym">CLO7</name>
    <name type="ordered locus">At1g23240</name>
    <name type="ORF">F26F24.9</name>
</gene>
<protein>
    <recommendedName>
        <fullName>Probable peroxygenase 7</fullName>
        <shortName>AtPXG7</shortName>
        <ecNumber>1.11.2.3</ecNumber>
    </recommendedName>
    <alternativeName>
        <fullName>Caleosin-7</fullName>
    </alternativeName>
</protein>
<name>PXG7_ARATH</name>
<keyword id="KW-0025">Alternative splicing</keyword>
<keyword id="KW-0106">Calcium</keyword>
<keyword id="KW-0349">Heme</keyword>
<keyword id="KW-0408">Iron</keyword>
<keyword id="KW-0479">Metal-binding</keyword>
<keyword id="KW-0560">Oxidoreductase</keyword>
<keyword id="KW-0597">Phosphoprotein</keyword>
<keyword id="KW-1185">Reference proteome</keyword>
<keyword id="KW-0964">Secreted</keyword>
<proteinExistence type="evidence at transcript level"/>